<organism>
    <name type="scientific">Pelotomaculum thermopropionicum (strain DSM 13744 / JCM 10971 / SI)</name>
    <dbReference type="NCBI Taxonomy" id="370438"/>
    <lineage>
        <taxon>Bacteria</taxon>
        <taxon>Bacillati</taxon>
        <taxon>Bacillota</taxon>
        <taxon>Clostridia</taxon>
        <taxon>Eubacteriales</taxon>
        <taxon>Desulfotomaculaceae</taxon>
        <taxon>Pelotomaculum</taxon>
    </lineage>
</organism>
<evidence type="ECO:0000255" key="1">
    <source>
        <dbReference type="HAMAP-Rule" id="MF_00528"/>
    </source>
</evidence>
<dbReference type="EC" id="3.6.1.9" evidence="1"/>
<dbReference type="EMBL" id="AP009389">
    <property type="protein sequence ID" value="BAF58996.1"/>
    <property type="molecule type" value="Genomic_DNA"/>
</dbReference>
<dbReference type="SMR" id="A5D426"/>
<dbReference type="STRING" id="370438.PTH_0815"/>
<dbReference type="KEGG" id="pth:PTH_0815"/>
<dbReference type="eggNOG" id="COG0424">
    <property type="taxonomic scope" value="Bacteria"/>
</dbReference>
<dbReference type="HOGENOM" id="CLU_040416_0_0_9"/>
<dbReference type="Proteomes" id="UP000006556">
    <property type="component" value="Chromosome"/>
</dbReference>
<dbReference type="GO" id="GO:0005737">
    <property type="term" value="C:cytoplasm"/>
    <property type="evidence" value="ECO:0007669"/>
    <property type="project" value="UniProtKB-SubCell"/>
</dbReference>
<dbReference type="GO" id="GO:0036218">
    <property type="term" value="F:dTTP diphosphatase activity"/>
    <property type="evidence" value="ECO:0007669"/>
    <property type="project" value="RHEA"/>
</dbReference>
<dbReference type="GO" id="GO:0036221">
    <property type="term" value="F:UTP diphosphatase activity"/>
    <property type="evidence" value="ECO:0007669"/>
    <property type="project" value="RHEA"/>
</dbReference>
<dbReference type="GO" id="GO:0009117">
    <property type="term" value="P:nucleotide metabolic process"/>
    <property type="evidence" value="ECO:0007669"/>
    <property type="project" value="UniProtKB-KW"/>
</dbReference>
<dbReference type="CDD" id="cd00555">
    <property type="entry name" value="Maf"/>
    <property type="match status" value="1"/>
</dbReference>
<dbReference type="FunFam" id="3.90.950.10:FF:000005">
    <property type="entry name" value="7-methyl-GTP pyrophosphatase"/>
    <property type="match status" value="1"/>
</dbReference>
<dbReference type="Gene3D" id="3.90.950.10">
    <property type="match status" value="1"/>
</dbReference>
<dbReference type="HAMAP" id="MF_00528">
    <property type="entry name" value="Maf"/>
    <property type="match status" value="1"/>
</dbReference>
<dbReference type="InterPro" id="IPR029001">
    <property type="entry name" value="ITPase-like_fam"/>
</dbReference>
<dbReference type="InterPro" id="IPR003697">
    <property type="entry name" value="Maf-like"/>
</dbReference>
<dbReference type="NCBIfam" id="TIGR00172">
    <property type="entry name" value="maf"/>
    <property type="match status" value="1"/>
</dbReference>
<dbReference type="PANTHER" id="PTHR43213">
    <property type="entry name" value="BIFUNCTIONAL DTTP/UTP PYROPHOSPHATASE/METHYLTRANSFERASE PROTEIN-RELATED"/>
    <property type="match status" value="1"/>
</dbReference>
<dbReference type="PANTHER" id="PTHR43213:SF5">
    <property type="entry name" value="BIFUNCTIONAL DTTP_UTP PYROPHOSPHATASE_METHYLTRANSFERASE PROTEIN-RELATED"/>
    <property type="match status" value="1"/>
</dbReference>
<dbReference type="Pfam" id="PF02545">
    <property type="entry name" value="Maf"/>
    <property type="match status" value="1"/>
</dbReference>
<dbReference type="PIRSF" id="PIRSF006305">
    <property type="entry name" value="Maf"/>
    <property type="match status" value="1"/>
</dbReference>
<dbReference type="SUPFAM" id="SSF52972">
    <property type="entry name" value="ITPase-like"/>
    <property type="match status" value="1"/>
</dbReference>
<proteinExistence type="inferred from homology"/>
<accession>A5D426</accession>
<protein>
    <recommendedName>
        <fullName evidence="1">dTTP/UTP pyrophosphatase</fullName>
        <shortName evidence="1">dTTPase/UTPase</shortName>
        <ecNumber evidence="1">3.6.1.9</ecNumber>
    </recommendedName>
    <alternativeName>
        <fullName evidence="1">Nucleoside triphosphate pyrophosphatase</fullName>
    </alternativeName>
    <alternativeName>
        <fullName evidence="1">Nucleotide pyrophosphatase</fullName>
        <shortName evidence="1">Nucleotide PPase</shortName>
    </alternativeName>
</protein>
<comment type="function">
    <text evidence="1">Nucleoside triphosphate pyrophosphatase that hydrolyzes dTTP and UTP. May have a dual role in cell division arrest and in preventing the incorporation of modified nucleotides into cellular nucleic acids.</text>
</comment>
<comment type="catalytic activity">
    <reaction evidence="1">
        <text>dTTP + H2O = dTMP + diphosphate + H(+)</text>
        <dbReference type="Rhea" id="RHEA:28534"/>
        <dbReference type="ChEBI" id="CHEBI:15377"/>
        <dbReference type="ChEBI" id="CHEBI:15378"/>
        <dbReference type="ChEBI" id="CHEBI:33019"/>
        <dbReference type="ChEBI" id="CHEBI:37568"/>
        <dbReference type="ChEBI" id="CHEBI:63528"/>
        <dbReference type="EC" id="3.6.1.9"/>
    </reaction>
</comment>
<comment type="catalytic activity">
    <reaction evidence="1">
        <text>UTP + H2O = UMP + diphosphate + H(+)</text>
        <dbReference type="Rhea" id="RHEA:29395"/>
        <dbReference type="ChEBI" id="CHEBI:15377"/>
        <dbReference type="ChEBI" id="CHEBI:15378"/>
        <dbReference type="ChEBI" id="CHEBI:33019"/>
        <dbReference type="ChEBI" id="CHEBI:46398"/>
        <dbReference type="ChEBI" id="CHEBI:57865"/>
        <dbReference type="EC" id="3.6.1.9"/>
    </reaction>
</comment>
<comment type="cofactor">
    <cofactor evidence="1">
        <name>a divalent metal cation</name>
        <dbReference type="ChEBI" id="CHEBI:60240"/>
    </cofactor>
</comment>
<comment type="subcellular location">
    <subcellularLocation>
        <location evidence="1">Cytoplasm</location>
    </subcellularLocation>
</comment>
<comment type="similarity">
    <text evidence="1">Belongs to the Maf family. YhdE subfamily.</text>
</comment>
<keyword id="KW-0963">Cytoplasm</keyword>
<keyword id="KW-0378">Hydrolase</keyword>
<keyword id="KW-0546">Nucleotide metabolism</keyword>
<keyword id="KW-1185">Reference proteome</keyword>
<reference key="1">
    <citation type="journal article" date="2008" name="Genome Res.">
        <title>The genome of Pelotomaculum thermopropionicum reveals niche-associated evolution in anaerobic microbiota.</title>
        <authorList>
            <person name="Kosaka T."/>
            <person name="Kato S."/>
            <person name="Shimoyama T."/>
            <person name="Ishii S."/>
            <person name="Abe T."/>
            <person name="Watanabe K."/>
        </authorList>
    </citation>
    <scope>NUCLEOTIDE SEQUENCE [LARGE SCALE GENOMIC DNA]</scope>
    <source>
        <strain>DSM 13744 / JCM 10971 / SI</strain>
    </source>
</reference>
<name>NTPPA_PELTS</name>
<gene>
    <name type="ordered locus">PTH_0815</name>
</gene>
<sequence length="191" mass="20430">MKEIVLASSSPRRRDLLKQLGLTFRIMTAGVDETPPGGLTPAEMVEVLAGRKAAAVAGMLEDALVIGADTVVVLNGRVLGKPADREEAAGMLRQLQGTDHTVYTGVAVMDAASKKMQVAHEKTRVFFKSLDEHEIRRYVATGEPMGKAGAYAVQGRAAAFIKGLEGCYTNVVGLPLARLADMLKKFGYNVL</sequence>
<feature type="chain" id="PRO_1000081718" description="dTTP/UTP pyrophosphatase">
    <location>
        <begin position="1"/>
        <end position="191"/>
    </location>
</feature>
<feature type="active site" description="Proton acceptor" evidence="1">
    <location>
        <position position="69"/>
    </location>
</feature>
<feature type="site" description="Important for substrate specificity" evidence="1">
    <location>
        <position position="12"/>
    </location>
</feature>
<feature type="site" description="Important for substrate specificity" evidence="1">
    <location>
        <position position="70"/>
    </location>
</feature>
<feature type="site" description="Important for substrate specificity" evidence="1">
    <location>
        <position position="154"/>
    </location>
</feature>